<keyword id="KW-0560">Oxidoreductase</keyword>
<keyword id="KW-1185">Reference proteome</keyword>
<sequence length="151" mass="17279">MSKYQKKSDGELKRTLTKLQYDVTQNAHTEPPYTNEYNRHYEKGIYVDITSGEPLFISTDKFKSGCGWPAFTKPISQDLIANYRDESHGMIRTEVRAKNSNSHLGHVFRDGPEEHGGLRYCINSAALKFIPFAEMESAGYGEYLKLFKESN</sequence>
<organism>
    <name type="scientific">Mycoplasma pneumoniae (strain ATCC 29342 / M129 / Subtype 1)</name>
    <name type="common">Mycoplasmoides pneumoniae</name>
    <dbReference type="NCBI Taxonomy" id="272634"/>
    <lineage>
        <taxon>Bacteria</taxon>
        <taxon>Bacillati</taxon>
        <taxon>Mycoplasmatota</taxon>
        <taxon>Mycoplasmoidales</taxon>
        <taxon>Mycoplasmoidaceae</taxon>
        <taxon>Mycoplasmoides</taxon>
    </lineage>
</organism>
<evidence type="ECO:0000255" key="1">
    <source>
        <dbReference type="HAMAP-Rule" id="MF_01400"/>
    </source>
</evidence>
<evidence type="ECO:0000255" key="2">
    <source>
        <dbReference type="PROSITE-ProRule" id="PRU01126"/>
    </source>
</evidence>
<dbReference type="EC" id="1.8.4.12" evidence="1"/>
<dbReference type="EMBL" id="U00089">
    <property type="protein sequence ID" value="AAB95828.1"/>
    <property type="molecule type" value="Genomic_DNA"/>
</dbReference>
<dbReference type="PIR" id="S73506">
    <property type="entry name" value="S73506"/>
</dbReference>
<dbReference type="RefSeq" id="NP_110351.1">
    <property type="nucleotide sequence ID" value="NC_000912.1"/>
</dbReference>
<dbReference type="RefSeq" id="WP_010875019.1">
    <property type="nucleotide sequence ID" value="NZ_OU342337.1"/>
</dbReference>
<dbReference type="SMR" id="P75129"/>
<dbReference type="IntAct" id="P75129">
    <property type="interactions" value="3"/>
</dbReference>
<dbReference type="STRING" id="272634.MPN_662"/>
<dbReference type="EnsemblBacteria" id="AAB95828">
    <property type="protein sequence ID" value="AAB95828"/>
    <property type="gene ID" value="MPN_662"/>
</dbReference>
<dbReference type="GeneID" id="66608650"/>
<dbReference type="KEGG" id="mpn:MPN_662"/>
<dbReference type="PATRIC" id="fig|272634.6.peg.727"/>
<dbReference type="HOGENOM" id="CLU_031040_8_5_14"/>
<dbReference type="OrthoDB" id="4174719at2"/>
<dbReference type="BioCyc" id="MPNE272634:G1GJ3-1059-MONOMER"/>
<dbReference type="Proteomes" id="UP000000808">
    <property type="component" value="Chromosome"/>
</dbReference>
<dbReference type="GO" id="GO:0005737">
    <property type="term" value="C:cytoplasm"/>
    <property type="evidence" value="ECO:0007669"/>
    <property type="project" value="TreeGrafter"/>
</dbReference>
<dbReference type="GO" id="GO:0033743">
    <property type="term" value="F:peptide-methionine (R)-S-oxide reductase activity"/>
    <property type="evidence" value="ECO:0007669"/>
    <property type="project" value="UniProtKB-UniRule"/>
</dbReference>
<dbReference type="GO" id="GO:0030091">
    <property type="term" value="P:protein repair"/>
    <property type="evidence" value="ECO:0007669"/>
    <property type="project" value="InterPro"/>
</dbReference>
<dbReference type="GO" id="GO:0006979">
    <property type="term" value="P:response to oxidative stress"/>
    <property type="evidence" value="ECO:0007669"/>
    <property type="project" value="InterPro"/>
</dbReference>
<dbReference type="FunFam" id="2.170.150.20:FF:000003">
    <property type="entry name" value="Peptide methionine sulfoxide reductase MsrB"/>
    <property type="match status" value="1"/>
</dbReference>
<dbReference type="Gene3D" id="2.170.150.20">
    <property type="entry name" value="Peptide methionine sulfoxide reductase"/>
    <property type="match status" value="1"/>
</dbReference>
<dbReference type="HAMAP" id="MF_01400">
    <property type="entry name" value="MsrB"/>
    <property type="match status" value="1"/>
</dbReference>
<dbReference type="InterPro" id="IPR028427">
    <property type="entry name" value="Met_Sox_Rdtase_MsrB"/>
</dbReference>
<dbReference type="InterPro" id="IPR002579">
    <property type="entry name" value="Met_Sox_Rdtase_MsrB_dom"/>
</dbReference>
<dbReference type="InterPro" id="IPR011057">
    <property type="entry name" value="Mss4-like_sf"/>
</dbReference>
<dbReference type="NCBIfam" id="TIGR00357">
    <property type="entry name" value="peptide-methionine (R)-S-oxide reductase MsrB"/>
    <property type="match status" value="1"/>
</dbReference>
<dbReference type="PANTHER" id="PTHR10173">
    <property type="entry name" value="METHIONINE SULFOXIDE REDUCTASE"/>
    <property type="match status" value="1"/>
</dbReference>
<dbReference type="PANTHER" id="PTHR10173:SF59">
    <property type="entry name" value="PEPTIDE METHIONINE SULFOXIDE REDUCTASE MSRA_MSRB"/>
    <property type="match status" value="1"/>
</dbReference>
<dbReference type="Pfam" id="PF01641">
    <property type="entry name" value="SelR"/>
    <property type="match status" value="1"/>
</dbReference>
<dbReference type="SUPFAM" id="SSF51316">
    <property type="entry name" value="Mss4-like"/>
    <property type="match status" value="1"/>
</dbReference>
<dbReference type="PROSITE" id="PS51790">
    <property type="entry name" value="MSRB"/>
    <property type="match status" value="1"/>
</dbReference>
<accession>P75129</accession>
<comment type="catalytic activity">
    <reaction evidence="1">
        <text>L-methionyl-[protein] + [thioredoxin]-disulfide + H2O = L-methionyl-(R)-S-oxide-[protein] + [thioredoxin]-dithiol</text>
        <dbReference type="Rhea" id="RHEA:24164"/>
        <dbReference type="Rhea" id="RHEA-COMP:10698"/>
        <dbReference type="Rhea" id="RHEA-COMP:10700"/>
        <dbReference type="Rhea" id="RHEA-COMP:12313"/>
        <dbReference type="Rhea" id="RHEA-COMP:12314"/>
        <dbReference type="ChEBI" id="CHEBI:15377"/>
        <dbReference type="ChEBI" id="CHEBI:16044"/>
        <dbReference type="ChEBI" id="CHEBI:29950"/>
        <dbReference type="ChEBI" id="CHEBI:45764"/>
        <dbReference type="ChEBI" id="CHEBI:50058"/>
        <dbReference type="EC" id="1.8.4.12"/>
    </reaction>
</comment>
<comment type="similarity">
    <text evidence="1">Belongs to the MsrB Met sulfoxide reductase family.</text>
</comment>
<reference key="1">
    <citation type="journal article" date="1996" name="Nucleic Acids Res.">
        <title>Complete sequence analysis of the genome of the bacterium Mycoplasma pneumoniae.</title>
        <authorList>
            <person name="Himmelreich R."/>
            <person name="Hilbert H."/>
            <person name="Plagens H."/>
            <person name="Pirkl E."/>
            <person name="Li B.-C."/>
            <person name="Herrmann R."/>
        </authorList>
    </citation>
    <scope>NUCLEOTIDE SEQUENCE [LARGE SCALE GENOMIC DNA]</scope>
    <source>
        <strain>ATCC 29342 / M129 / Subtype 1</strain>
    </source>
</reference>
<protein>
    <recommendedName>
        <fullName evidence="1">Peptide methionine sulfoxide reductase MsrB</fullName>
        <ecNumber evidence="1">1.8.4.12</ecNumber>
    </recommendedName>
    <alternativeName>
        <fullName evidence="1">Peptide-methionine (R)-S-oxide reductase</fullName>
    </alternativeName>
</protein>
<gene>
    <name evidence="1" type="primary">msrB</name>
    <name type="ordered locus">MPN_662</name>
    <name type="ORF">K05_orf151</name>
    <name type="ORF">MP180</name>
</gene>
<feature type="chain" id="PRO_0000140284" description="Peptide methionine sulfoxide reductase MsrB">
    <location>
        <begin position="1"/>
        <end position="151"/>
    </location>
</feature>
<feature type="domain" description="MsrB" evidence="2">
    <location>
        <begin position="9"/>
        <end position="132"/>
    </location>
</feature>
<feature type="active site" description="Nucleophile" evidence="2">
    <location>
        <position position="121"/>
    </location>
</feature>
<proteinExistence type="inferred from homology"/>
<name>MSRB_MYCPN</name>